<organism>
    <name type="scientific">Staphylococcus aureus (strain MW2)</name>
    <dbReference type="NCBI Taxonomy" id="196620"/>
    <lineage>
        <taxon>Bacteria</taxon>
        <taxon>Bacillati</taxon>
        <taxon>Bacillota</taxon>
        <taxon>Bacilli</taxon>
        <taxon>Bacillales</taxon>
        <taxon>Staphylococcaceae</taxon>
        <taxon>Staphylococcus</taxon>
    </lineage>
</organism>
<name>DHE2_STAAW</name>
<dbReference type="EC" id="1.4.1.2"/>
<dbReference type="EMBL" id="BA000033">
    <property type="protein sequence ID" value="BAB94705.1"/>
    <property type="molecule type" value="Genomic_DNA"/>
</dbReference>
<dbReference type="RefSeq" id="WP_000138487.1">
    <property type="nucleotide sequence ID" value="NC_003923.1"/>
</dbReference>
<dbReference type="SMR" id="Q7A1B9"/>
<dbReference type="KEGG" id="sam:MW0840"/>
<dbReference type="HOGENOM" id="CLU_025763_1_2_9"/>
<dbReference type="GO" id="GO:0004352">
    <property type="term" value="F:glutamate dehydrogenase (NAD+) activity"/>
    <property type="evidence" value="ECO:0000250"/>
    <property type="project" value="UniProtKB"/>
</dbReference>
<dbReference type="GO" id="GO:0006520">
    <property type="term" value="P:amino acid metabolic process"/>
    <property type="evidence" value="ECO:0000250"/>
    <property type="project" value="UniProtKB"/>
</dbReference>
<dbReference type="GO" id="GO:0006538">
    <property type="term" value="P:glutamate catabolic process"/>
    <property type="evidence" value="ECO:0007669"/>
    <property type="project" value="TreeGrafter"/>
</dbReference>
<dbReference type="CDD" id="cd01076">
    <property type="entry name" value="NAD_bind_1_Glu_DH"/>
    <property type="match status" value="1"/>
</dbReference>
<dbReference type="FunFam" id="3.40.50.10860:FF:000008">
    <property type="entry name" value="Glutamate dehydrogenase"/>
    <property type="match status" value="1"/>
</dbReference>
<dbReference type="FunFam" id="3.40.50.720:FF:000242">
    <property type="entry name" value="Glutamate dehydrogenase"/>
    <property type="match status" value="1"/>
</dbReference>
<dbReference type="Gene3D" id="1.10.8.1210">
    <property type="match status" value="2"/>
</dbReference>
<dbReference type="Gene3D" id="3.40.50.10860">
    <property type="entry name" value="Leucine Dehydrogenase, chain A, domain 1"/>
    <property type="match status" value="1"/>
</dbReference>
<dbReference type="Gene3D" id="3.40.50.720">
    <property type="entry name" value="NAD(P)-binding Rossmann-like Domain"/>
    <property type="match status" value="1"/>
</dbReference>
<dbReference type="InterPro" id="IPR046346">
    <property type="entry name" value="Aminoacid_DH-like_N_sf"/>
</dbReference>
<dbReference type="InterPro" id="IPR006095">
    <property type="entry name" value="Glu/Leu/Phe/Val/Trp_DH"/>
</dbReference>
<dbReference type="InterPro" id="IPR006096">
    <property type="entry name" value="Glu/Leu/Phe/Val/Trp_DH_C"/>
</dbReference>
<dbReference type="InterPro" id="IPR006097">
    <property type="entry name" value="Glu/Leu/Phe/Val/Trp_DH_dimer"/>
</dbReference>
<dbReference type="InterPro" id="IPR033524">
    <property type="entry name" value="Glu/Leu/Phe/Val_DH_AS"/>
</dbReference>
<dbReference type="InterPro" id="IPR014362">
    <property type="entry name" value="Glu_DH"/>
</dbReference>
<dbReference type="InterPro" id="IPR036291">
    <property type="entry name" value="NAD(P)-bd_dom_sf"/>
</dbReference>
<dbReference type="InterPro" id="IPR033922">
    <property type="entry name" value="NAD_bind_Glu_DH"/>
</dbReference>
<dbReference type="PANTHER" id="PTHR11606">
    <property type="entry name" value="GLUTAMATE DEHYDROGENASE"/>
    <property type="match status" value="1"/>
</dbReference>
<dbReference type="PANTHER" id="PTHR11606:SF13">
    <property type="entry name" value="GLUTAMATE DEHYDROGENASE 1, MITOCHONDRIAL"/>
    <property type="match status" value="1"/>
</dbReference>
<dbReference type="Pfam" id="PF00208">
    <property type="entry name" value="ELFV_dehydrog"/>
    <property type="match status" value="1"/>
</dbReference>
<dbReference type="Pfam" id="PF02812">
    <property type="entry name" value="ELFV_dehydrog_N"/>
    <property type="match status" value="1"/>
</dbReference>
<dbReference type="PIRSF" id="PIRSF000185">
    <property type="entry name" value="Glu_DH"/>
    <property type="match status" value="1"/>
</dbReference>
<dbReference type="PRINTS" id="PR00082">
    <property type="entry name" value="GLFDHDRGNASE"/>
</dbReference>
<dbReference type="SMART" id="SM00839">
    <property type="entry name" value="ELFV_dehydrog"/>
    <property type="match status" value="1"/>
</dbReference>
<dbReference type="SUPFAM" id="SSF53223">
    <property type="entry name" value="Aminoacid dehydrogenase-like, N-terminal domain"/>
    <property type="match status" value="1"/>
</dbReference>
<dbReference type="SUPFAM" id="SSF51735">
    <property type="entry name" value="NAD(P)-binding Rossmann-fold domains"/>
    <property type="match status" value="1"/>
</dbReference>
<dbReference type="PROSITE" id="PS00074">
    <property type="entry name" value="GLFV_DEHYDROGENASE"/>
    <property type="match status" value="1"/>
</dbReference>
<keyword id="KW-0520">NAD</keyword>
<keyword id="KW-0560">Oxidoreductase</keyword>
<reference key="1">
    <citation type="journal article" date="2002" name="Lancet">
        <title>Genome and virulence determinants of high virulence community-acquired MRSA.</title>
        <authorList>
            <person name="Baba T."/>
            <person name="Takeuchi F."/>
            <person name="Kuroda M."/>
            <person name="Yuzawa H."/>
            <person name="Aoki K."/>
            <person name="Oguchi A."/>
            <person name="Nagai Y."/>
            <person name="Iwama N."/>
            <person name="Asano K."/>
            <person name="Naimi T."/>
            <person name="Kuroda H."/>
            <person name="Cui L."/>
            <person name="Yamamoto K."/>
            <person name="Hiramatsu K."/>
        </authorList>
    </citation>
    <scope>NUCLEOTIDE SEQUENCE [LARGE SCALE GENOMIC DNA]</scope>
    <source>
        <strain>MW2</strain>
    </source>
</reference>
<feature type="chain" id="PRO_0000223331" description="NAD-specific glutamate dehydrogenase">
    <location>
        <begin position="1"/>
        <end position="414"/>
    </location>
</feature>
<feature type="active site" description="Proton donor" evidence="2">
    <location>
        <position position="106"/>
    </location>
</feature>
<feature type="binding site" evidence="1">
    <location>
        <position position="70"/>
    </location>
    <ligand>
        <name>substrate</name>
    </ligand>
</feature>
<feature type="binding site" evidence="1">
    <location>
        <position position="94"/>
    </location>
    <ligand>
        <name>substrate</name>
    </ligand>
</feature>
<feature type="binding site" evidence="1">
    <location>
        <position position="190"/>
    </location>
    <ligand>
        <name>NAD(+)</name>
        <dbReference type="ChEBI" id="CHEBI:57540"/>
    </ligand>
</feature>
<feature type="binding site" evidence="1">
    <location>
        <position position="221"/>
    </location>
    <ligand>
        <name>NAD(+)</name>
        <dbReference type="ChEBI" id="CHEBI:57540"/>
    </ligand>
</feature>
<feature type="binding site" evidence="1">
    <location>
        <position position="348"/>
    </location>
    <ligand>
        <name>substrate</name>
    </ligand>
</feature>
<feature type="site" description="Important for catalysis" evidence="1">
    <location>
        <position position="146"/>
    </location>
</feature>
<gene>
    <name type="primary">gluD</name>
    <name type="synonym">gudB</name>
    <name type="ordered locus">MW0840</name>
</gene>
<evidence type="ECO:0000250" key="1"/>
<evidence type="ECO:0000255" key="2">
    <source>
        <dbReference type="PROSITE-ProRule" id="PRU10011"/>
    </source>
</evidence>
<evidence type="ECO:0000305" key="3"/>
<accession>Q7A1B9</accession>
<sequence length="414" mass="45760">MTENNNLVTSTQGIIKEALHKLGFDEGMYDLIKEPLRMLQVRIPVRMDDGTVKTFTGYRAQHNDAVGPTKGGVRFHPDVDEEEVKALSMWMTLKCGIVNLPYGGGKGGIVCDPRQMSIHEVERLSRGYVRAISQFVGPNKDIPAPDVFTNSQIMAWMMDEYSALDKFNSPGFITGKPIVLGGSHGRDRSTALGVVIAIEQAAKRRNMQIEGAKVVIQGFGNAGSFLAKFLYDLGAKIVGISDAYGALHDPNGLDIDYLLDRRDSFGTVTNLFEETISNKELFELDCDILVPAAISNQITEDNAHDIKASIVVEAANGPTTPEATRILTERGILLVPDVLASAGGVTVSYFEWVQNNQGYYWSEEEVNEKLREKLEAAFDTIYELSQNRKIDMRLAAYIIGIKRTAEAARYRGWA</sequence>
<comment type="catalytic activity">
    <reaction>
        <text>L-glutamate + NAD(+) + H2O = 2-oxoglutarate + NH4(+) + NADH + H(+)</text>
        <dbReference type="Rhea" id="RHEA:15133"/>
        <dbReference type="ChEBI" id="CHEBI:15377"/>
        <dbReference type="ChEBI" id="CHEBI:15378"/>
        <dbReference type="ChEBI" id="CHEBI:16810"/>
        <dbReference type="ChEBI" id="CHEBI:28938"/>
        <dbReference type="ChEBI" id="CHEBI:29985"/>
        <dbReference type="ChEBI" id="CHEBI:57540"/>
        <dbReference type="ChEBI" id="CHEBI:57945"/>
        <dbReference type="EC" id="1.4.1.2"/>
    </reaction>
</comment>
<comment type="subunit">
    <text evidence="1">Homohexamer.</text>
</comment>
<comment type="similarity">
    <text evidence="3">Belongs to the Glu/Leu/Phe/Val dehydrogenases family.</text>
</comment>
<proteinExistence type="inferred from homology"/>
<protein>
    <recommendedName>
        <fullName>NAD-specific glutamate dehydrogenase</fullName>
        <shortName>NAD-GDH</shortName>
        <ecNumber>1.4.1.2</ecNumber>
    </recommendedName>
</protein>